<name>MDH_BORPD</name>
<evidence type="ECO:0000255" key="1">
    <source>
        <dbReference type="HAMAP-Rule" id="MF_01517"/>
    </source>
</evidence>
<keyword id="KW-0520">NAD</keyword>
<keyword id="KW-0560">Oxidoreductase</keyword>
<keyword id="KW-0816">Tricarboxylic acid cycle</keyword>
<sequence length="329" mass="35440">MSKPAMRVAVTGAAGQIGYALLFRIASGEMLGKDQPVILQLLEIPDEKAQKALKGVIMELDDCAFPLLQEVTAHSDPRTAFKDADVALLVGARPRGPGMERKDLLSVNAQIFTAQGKALNDVASRNVKVLVVGNPANTNAYIAMKSAPDLPAKNFTAMLRLDHNRALSQLAAKSGKAVADIEKLVVWGNHSPTMYPDYRFATVGGQSLAKLINDDAWNRDTFIPTVGKRGAAIIEARGLSSAASAANAAIDHVRDWVLGSNGKWVTMGIPSDGSYGIPEGIIYGVPVTTENGEYKRVEGLEIDAFSRERLDFTLKELLEERDGVKDLLK</sequence>
<proteinExistence type="inferred from homology"/>
<comment type="function">
    <text evidence="1">Catalyzes the reversible oxidation of malate to oxaloacetate.</text>
</comment>
<comment type="catalytic activity">
    <reaction evidence="1">
        <text>(S)-malate + NAD(+) = oxaloacetate + NADH + H(+)</text>
        <dbReference type="Rhea" id="RHEA:21432"/>
        <dbReference type="ChEBI" id="CHEBI:15378"/>
        <dbReference type="ChEBI" id="CHEBI:15589"/>
        <dbReference type="ChEBI" id="CHEBI:16452"/>
        <dbReference type="ChEBI" id="CHEBI:57540"/>
        <dbReference type="ChEBI" id="CHEBI:57945"/>
        <dbReference type="EC" id="1.1.1.37"/>
    </reaction>
</comment>
<comment type="similarity">
    <text evidence="1">Belongs to the LDH/MDH superfamily. MDH type 2 family.</text>
</comment>
<feature type="chain" id="PRO_1000191609" description="Malate dehydrogenase">
    <location>
        <begin position="1"/>
        <end position="329"/>
    </location>
</feature>
<feature type="active site" description="Proton acceptor" evidence="1">
    <location>
        <position position="190"/>
    </location>
</feature>
<feature type="binding site" evidence="1">
    <location>
        <begin position="12"/>
        <end position="18"/>
    </location>
    <ligand>
        <name>NAD(+)</name>
        <dbReference type="ChEBI" id="CHEBI:57540"/>
    </ligand>
</feature>
<feature type="binding site" evidence="1">
    <location>
        <position position="95"/>
    </location>
    <ligand>
        <name>substrate</name>
    </ligand>
</feature>
<feature type="binding site" evidence="1">
    <location>
        <position position="101"/>
    </location>
    <ligand>
        <name>substrate</name>
    </ligand>
</feature>
<feature type="binding site" evidence="1">
    <location>
        <position position="108"/>
    </location>
    <ligand>
        <name>NAD(+)</name>
        <dbReference type="ChEBI" id="CHEBI:57540"/>
    </ligand>
</feature>
<feature type="binding site" evidence="1">
    <location>
        <position position="115"/>
    </location>
    <ligand>
        <name>NAD(+)</name>
        <dbReference type="ChEBI" id="CHEBI:57540"/>
    </ligand>
</feature>
<feature type="binding site" evidence="1">
    <location>
        <begin position="132"/>
        <end position="134"/>
    </location>
    <ligand>
        <name>NAD(+)</name>
        <dbReference type="ChEBI" id="CHEBI:57540"/>
    </ligand>
</feature>
<feature type="binding site" evidence="1">
    <location>
        <position position="134"/>
    </location>
    <ligand>
        <name>substrate</name>
    </ligand>
</feature>
<feature type="binding site" evidence="1">
    <location>
        <position position="165"/>
    </location>
    <ligand>
        <name>substrate</name>
    </ligand>
</feature>
<dbReference type="EC" id="1.1.1.37" evidence="1"/>
<dbReference type="EMBL" id="AM902716">
    <property type="protein sequence ID" value="CAP42157.1"/>
    <property type="molecule type" value="Genomic_DNA"/>
</dbReference>
<dbReference type="SMR" id="A9IIS3"/>
<dbReference type="STRING" id="94624.Bpet1818"/>
<dbReference type="KEGG" id="bpt:Bpet1818"/>
<dbReference type="eggNOG" id="COG0039">
    <property type="taxonomic scope" value="Bacteria"/>
</dbReference>
<dbReference type="Proteomes" id="UP000001225">
    <property type="component" value="Chromosome"/>
</dbReference>
<dbReference type="GO" id="GO:0030060">
    <property type="term" value="F:L-malate dehydrogenase (NAD+) activity"/>
    <property type="evidence" value="ECO:0007669"/>
    <property type="project" value="UniProtKB-UniRule"/>
</dbReference>
<dbReference type="GO" id="GO:0006108">
    <property type="term" value="P:malate metabolic process"/>
    <property type="evidence" value="ECO:0007669"/>
    <property type="project" value="InterPro"/>
</dbReference>
<dbReference type="GO" id="GO:0006099">
    <property type="term" value="P:tricarboxylic acid cycle"/>
    <property type="evidence" value="ECO:0007669"/>
    <property type="project" value="UniProtKB-UniRule"/>
</dbReference>
<dbReference type="CDD" id="cd01338">
    <property type="entry name" value="MDH_chloroplast-like"/>
    <property type="match status" value="1"/>
</dbReference>
<dbReference type="FunFam" id="3.40.50.720:FF:000010">
    <property type="entry name" value="Malate dehydrogenase"/>
    <property type="match status" value="1"/>
</dbReference>
<dbReference type="FunFam" id="3.90.110.10:FF:000002">
    <property type="entry name" value="Malate dehydrogenase"/>
    <property type="match status" value="1"/>
</dbReference>
<dbReference type="Gene3D" id="3.90.110.10">
    <property type="entry name" value="Lactate dehydrogenase/glycoside hydrolase, family 4, C-terminal"/>
    <property type="match status" value="1"/>
</dbReference>
<dbReference type="Gene3D" id="3.40.50.720">
    <property type="entry name" value="NAD(P)-binding Rossmann-like Domain"/>
    <property type="match status" value="1"/>
</dbReference>
<dbReference type="HAMAP" id="MF_01517">
    <property type="entry name" value="Malate_dehydrog_2"/>
    <property type="match status" value="1"/>
</dbReference>
<dbReference type="InterPro" id="IPR001557">
    <property type="entry name" value="L-lactate/malate_DH"/>
</dbReference>
<dbReference type="InterPro" id="IPR022383">
    <property type="entry name" value="Lactate/malate_DH_C"/>
</dbReference>
<dbReference type="InterPro" id="IPR001236">
    <property type="entry name" value="Lactate/malate_DH_N"/>
</dbReference>
<dbReference type="InterPro" id="IPR015955">
    <property type="entry name" value="Lactate_DH/Glyco_Ohase_4_C"/>
</dbReference>
<dbReference type="InterPro" id="IPR010945">
    <property type="entry name" value="Malate_DH_type2"/>
</dbReference>
<dbReference type="InterPro" id="IPR036291">
    <property type="entry name" value="NAD(P)-bd_dom_sf"/>
</dbReference>
<dbReference type="NCBIfam" id="TIGR01759">
    <property type="entry name" value="MalateDH-SF1"/>
    <property type="match status" value="1"/>
</dbReference>
<dbReference type="NCBIfam" id="NF003916">
    <property type="entry name" value="PRK05442.1"/>
    <property type="match status" value="1"/>
</dbReference>
<dbReference type="PANTHER" id="PTHR23382">
    <property type="entry name" value="MALATE DEHYDROGENASE"/>
    <property type="match status" value="1"/>
</dbReference>
<dbReference type="Pfam" id="PF02866">
    <property type="entry name" value="Ldh_1_C"/>
    <property type="match status" value="1"/>
</dbReference>
<dbReference type="Pfam" id="PF00056">
    <property type="entry name" value="Ldh_1_N"/>
    <property type="match status" value="1"/>
</dbReference>
<dbReference type="PIRSF" id="PIRSF000102">
    <property type="entry name" value="Lac_mal_DH"/>
    <property type="match status" value="1"/>
</dbReference>
<dbReference type="SUPFAM" id="SSF56327">
    <property type="entry name" value="LDH C-terminal domain-like"/>
    <property type="match status" value="1"/>
</dbReference>
<dbReference type="SUPFAM" id="SSF51735">
    <property type="entry name" value="NAD(P)-binding Rossmann-fold domains"/>
    <property type="match status" value="1"/>
</dbReference>
<accession>A9IIS3</accession>
<organism>
    <name type="scientific">Bordetella petrii (strain ATCC BAA-461 / DSM 12804 / CCUG 43448)</name>
    <dbReference type="NCBI Taxonomy" id="340100"/>
    <lineage>
        <taxon>Bacteria</taxon>
        <taxon>Pseudomonadati</taxon>
        <taxon>Pseudomonadota</taxon>
        <taxon>Betaproteobacteria</taxon>
        <taxon>Burkholderiales</taxon>
        <taxon>Alcaligenaceae</taxon>
        <taxon>Bordetella</taxon>
    </lineage>
</organism>
<protein>
    <recommendedName>
        <fullName evidence="1">Malate dehydrogenase</fullName>
        <ecNumber evidence="1">1.1.1.37</ecNumber>
    </recommendedName>
</protein>
<reference key="1">
    <citation type="journal article" date="2008" name="BMC Genomics">
        <title>The missing link: Bordetella petrii is endowed with both the metabolic versatility of environmental bacteria and virulence traits of pathogenic Bordetellae.</title>
        <authorList>
            <person name="Gross R."/>
            <person name="Guzman C.A."/>
            <person name="Sebaihia M."/>
            <person name="Martin dos Santos V.A.P."/>
            <person name="Pieper D.H."/>
            <person name="Koebnik R."/>
            <person name="Lechner M."/>
            <person name="Bartels D."/>
            <person name="Buhrmester J."/>
            <person name="Choudhuri J.V."/>
            <person name="Ebensen T."/>
            <person name="Gaigalat L."/>
            <person name="Herrmann S."/>
            <person name="Khachane A.N."/>
            <person name="Larisch C."/>
            <person name="Link S."/>
            <person name="Linke B."/>
            <person name="Meyer F."/>
            <person name="Mormann S."/>
            <person name="Nakunst D."/>
            <person name="Rueckert C."/>
            <person name="Schneiker-Bekel S."/>
            <person name="Schulze K."/>
            <person name="Voerholter F.-J."/>
            <person name="Yevsa T."/>
            <person name="Engle J.T."/>
            <person name="Goldman W.E."/>
            <person name="Puehler A."/>
            <person name="Goebel U.B."/>
            <person name="Goesmann A."/>
            <person name="Bloecker H."/>
            <person name="Kaiser O."/>
            <person name="Martinez-Arias R."/>
        </authorList>
    </citation>
    <scope>NUCLEOTIDE SEQUENCE [LARGE SCALE GENOMIC DNA]</scope>
    <source>
        <strain>ATCC BAA-461 / DSM 12804 / CCUG 43448</strain>
    </source>
</reference>
<gene>
    <name evidence="1" type="primary">mdh</name>
    <name type="ordered locus">Bpet1818</name>
</gene>